<dbReference type="EMBL" id="AF022214">
    <property type="protein sequence ID" value="AAC18459.1"/>
    <property type="molecule type" value="Genomic_DNA"/>
</dbReference>
<dbReference type="PIR" id="H72801">
    <property type="entry name" value="H72801"/>
</dbReference>
<dbReference type="RefSeq" id="NP_046834.1">
    <property type="nucleotide sequence ID" value="NC_001900.1"/>
</dbReference>
<dbReference type="SMR" id="O64212"/>
<dbReference type="GeneID" id="1261576"/>
<dbReference type="KEGG" id="vg:1261576"/>
<dbReference type="OrthoDB" id="14615at10239"/>
<dbReference type="Proteomes" id="UP000002131">
    <property type="component" value="Segment"/>
</dbReference>
<dbReference type="InterPro" id="IPR018963">
    <property type="entry name" value="Mycophage_D29_Gp19"/>
</dbReference>
<dbReference type="Pfam" id="PF09355">
    <property type="entry name" value="Phage_Gp19"/>
    <property type="match status" value="1"/>
</dbReference>
<keyword id="KW-1185">Reference proteome</keyword>
<accession>O64212</accession>
<proteinExistence type="predicted"/>
<feature type="chain" id="PRO_0000164726" description="Gene 19 protein">
    <location>
        <begin position="1"/>
        <end position="124"/>
    </location>
</feature>
<protein>
    <recommendedName>
        <fullName>Gene 19 protein</fullName>
    </recommendedName>
    <alternativeName>
        <fullName>Gp19</fullName>
    </alternativeName>
</protein>
<sequence length="124" mass="14135">MAYATADDVVTLWAKEPEPEVMALIERRLEQVERMIRRRIPDLDARVSSDIFRADLIDIEADAVLRLVRNPEGYLSETDGAYTYQLQADLSQGKLVILDEEWTTLGVNRLSRMSTLVPNIVMPT</sequence>
<organismHost>
    <name type="scientific">Mycobacterium</name>
    <dbReference type="NCBI Taxonomy" id="1763"/>
</organismHost>
<reference key="1">
    <citation type="journal article" date="1998" name="J. Mol. Biol.">
        <title>Genome structure of mycobacteriophage D29: implications for phage evolution.</title>
        <authorList>
            <person name="Ford M.E."/>
            <person name="Sarkis G.J."/>
            <person name="Belanger A.E."/>
            <person name="Hendrix R.W."/>
            <person name="Hatfull G.F."/>
        </authorList>
    </citation>
    <scope>NUCLEOTIDE SEQUENCE [LARGE SCALE GENOMIC DNA]</scope>
</reference>
<gene>
    <name type="primary">19</name>
</gene>
<organism>
    <name type="scientific">Mycobacterium phage D29</name>
    <name type="common">Mycobacteriophage D29</name>
    <dbReference type="NCBI Taxonomy" id="28369"/>
    <lineage>
        <taxon>Viruses</taxon>
        <taxon>Duplodnaviria</taxon>
        <taxon>Heunggongvirae</taxon>
        <taxon>Uroviricota</taxon>
        <taxon>Caudoviricetes</taxon>
        <taxon>Fromanvirus</taxon>
    </lineage>
</organism>
<name>VG19_BPMD2</name>